<reference key="1">
    <citation type="journal article" date="2001" name="DNA Res.">
        <title>Complete genomic sequence of the filamentous nitrogen-fixing cyanobacterium Anabaena sp. strain PCC 7120.</title>
        <authorList>
            <person name="Kaneko T."/>
            <person name="Nakamura Y."/>
            <person name="Wolk C.P."/>
            <person name="Kuritz T."/>
            <person name="Sasamoto S."/>
            <person name="Watanabe A."/>
            <person name="Iriguchi M."/>
            <person name="Ishikawa A."/>
            <person name="Kawashima K."/>
            <person name="Kimura T."/>
            <person name="Kishida Y."/>
            <person name="Kohara M."/>
            <person name="Matsumoto M."/>
            <person name="Matsuno A."/>
            <person name="Muraki A."/>
            <person name="Nakazaki N."/>
            <person name="Shimpo S."/>
            <person name="Sugimoto M."/>
            <person name="Takazawa M."/>
            <person name="Yamada M."/>
            <person name="Yasuda M."/>
            <person name="Tabata S."/>
        </authorList>
    </citation>
    <scope>NUCLEOTIDE SEQUENCE [LARGE SCALE GENOMIC DNA]</scope>
    <source>
        <strain>PCC 7120 / SAG 25.82 / UTEX 2576</strain>
    </source>
</reference>
<evidence type="ECO:0000255" key="1">
    <source>
        <dbReference type="HAMAP-Rule" id="MF_00107"/>
    </source>
</evidence>
<organism>
    <name type="scientific">Nostoc sp. (strain PCC 7120 / SAG 25.82 / UTEX 2576)</name>
    <dbReference type="NCBI Taxonomy" id="103690"/>
    <lineage>
        <taxon>Bacteria</taxon>
        <taxon>Bacillati</taxon>
        <taxon>Cyanobacteriota</taxon>
        <taxon>Cyanophyceae</taxon>
        <taxon>Nostocales</taxon>
        <taxon>Nostocaceae</taxon>
        <taxon>Nostoc</taxon>
    </lineage>
</organism>
<gene>
    <name evidence="1" type="primary">ispF</name>
    <name type="ordered locus">alr3883</name>
</gene>
<feature type="chain" id="PRO_0000189431" description="2-C-methyl-D-erythritol 2,4-cyclodiphosphate synthase">
    <location>
        <begin position="1"/>
        <end position="165"/>
    </location>
</feature>
<feature type="binding site" evidence="1">
    <location>
        <begin position="12"/>
        <end position="14"/>
    </location>
    <ligand>
        <name>4-CDP-2-C-methyl-D-erythritol 2-phosphate</name>
        <dbReference type="ChEBI" id="CHEBI:57919"/>
    </ligand>
</feature>
<feature type="binding site" evidence="1">
    <location>
        <position position="12"/>
    </location>
    <ligand>
        <name>a divalent metal cation</name>
        <dbReference type="ChEBI" id="CHEBI:60240"/>
    </ligand>
</feature>
<feature type="binding site" evidence="1">
    <location>
        <position position="14"/>
    </location>
    <ligand>
        <name>a divalent metal cation</name>
        <dbReference type="ChEBI" id="CHEBI:60240"/>
    </ligand>
</feature>
<feature type="binding site" evidence="1">
    <location>
        <begin position="38"/>
        <end position="39"/>
    </location>
    <ligand>
        <name>4-CDP-2-C-methyl-D-erythritol 2-phosphate</name>
        <dbReference type="ChEBI" id="CHEBI:57919"/>
    </ligand>
</feature>
<feature type="binding site" evidence="1">
    <location>
        <position position="46"/>
    </location>
    <ligand>
        <name>a divalent metal cation</name>
        <dbReference type="ChEBI" id="CHEBI:60240"/>
    </ligand>
</feature>
<feature type="binding site" evidence="1">
    <location>
        <begin position="60"/>
        <end position="62"/>
    </location>
    <ligand>
        <name>4-CDP-2-C-methyl-D-erythritol 2-phosphate</name>
        <dbReference type="ChEBI" id="CHEBI:57919"/>
    </ligand>
</feature>
<feature type="binding site" evidence="1">
    <location>
        <begin position="136"/>
        <end position="139"/>
    </location>
    <ligand>
        <name>4-CDP-2-C-methyl-D-erythritol 2-phosphate</name>
        <dbReference type="ChEBI" id="CHEBI:57919"/>
    </ligand>
</feature>
<feature type="binding site" evidence="1">
    <location>
        <position position="146"/>
    </location>
    <ligand>
        <name>4-CDP-2-C-methyl-D-erythritol 2-phosphate</name>
        <dbReference type="ChEBI" id="CHEBI:57919"/>
    </ligand>
</feature>
<feature type="site" description="Transition state stabilizer" evidence="1">
    <location>
        <position position="38"/>
    </location>
</feature>
<feature type="site" description="Transition state stabilizer" evidence="1">
    <location>
        <position position="137"/>
    </location>
</feature>
<protein>
    <recommendedName>
        <fullName evidence="1">2-C-methyl-D-erythritol 2,4-cyclodiphosphate synthase</fullName>
        <shortName evidence="1">MECDP-synthase</shortName>
        <shortName evidence="1">MECPP-synthase</shortName>
        <shortName evidence="1">MECPS</shortName>
        <ecNumber evidence="1">4.6.1.12</ecNumber>
    </recommendedName>
</protein>
<keyword id="KW-0414">Isoprene biosynthesis</keyword>
<keyword id="KW-0456">Lyase</keyword>
<keyword id="KW-0479">Metal-binding</keyword>
<keyword id="KW-1185">Reference proteome</keyword>
<proteinExistence type="inferred from homology"/>
<comment type="function">
    <text evidence="1">Involved in the biosynthesis of isopentenyl diphosphate (IPP) and dimethylallyl diphosphate (DMAPP), two major building blocks of isoprenoid compounds. Catalyzes the conversion of 4-diphosphocytidyl-2-C-methyl-D-erythritol 2-phosphate (CDP-ME2P) to 2-C-methyl-D-erythritol 2,4-cyclodiphosphate (ME-CPP) with a corresponding release of cytidine 5-monophosphate (CMP).</text>
</comment>
<comment type="catalytic activity">
    <reaction evidence="1">
        <text>4-CDP-2-C-methyl-D-erythritol 2-phosphate = 2-C-methyl-D-erythritol 2,4-cyclic diphosphate + CMP</text>
        <dbReference type="Rhea" id="RHEA:23864"/>
        <dbReference type="ChEBI" id="CHEBI:57919"/>
        <dbReference type="ChEBI" id="CHEBI:58483"/>
        <dbReference type="ChEBI" id="CHEBI:60377"/>
        <dbReference type="EC" id="4.6.1.12"/>
    </reaction>
</comment>
<comment type="cofactor">
    <cofactor evidence="1">
        <name>a divalent metal cation</name>
        <dbReference type="ChEBI" id="CHEBI:60240"/>
    </cofactor>
    <text evidence="1">Binds 1 divalent metal cation per subunit.</text>
</comment>
<comment type="pathway">
    <text evidence="1">Isoprenoid biosynthesis; isopentenyl diphosphate biosynthesis via DXP pathway; isopentenyl diphosphate from 1-deoxy-D-xylulose 5-phosphate: step 4/6.</text>
</comment>
<comment type="subunit">
    <text evidence="1">Homotrimer.</text>
</comment>
<comment type="similarity">
    <text evidence="1">Belongs to the IspF family.</text>
</comment>
<accession>Q8YQF0</accession>
<sequence length="165" mass="17874">MTMSIRIGNGYDIHRLVSDRALILGGVHIPHELGLLGHSDADVLTHAIMDAMLGALSLGDIGHYFPPTDPQWAGADSLVLLSQVNELIRTQGWRIGNIDSVVVAERPKLKPHIKTMRDKLADILQLEPNQIGVKATTNEKLGPVGREEGICAYAVVLLVSSDEIS</sequence>
<dbReference type="EC" id="4.6.1.12" evidence="1"/>
<dbReference type="EMBL" id="BA000019">
    <property type="protein sequence ID" value="BAB75582.1"/>
    <property type="molecule type" value="Genomic_DNA"/>
</dbReference>
<dbReference type="PIR" id="AD2291">
    <property type="entry name" value="AD2291"/>
</dbReference>
<dbReference type="RefSeq" id="WP_010998024.1">
    <property type="nucleotide sequence ID" value="NZ_RSCN01000011.1"/>
</dbReference>
<dbReference type="SMR" id="Q8YQF0"/>
<dbReference type="STRING" id="103690.gene:10495925"/>
<dbReference type="KEGG" id="ana:alr3883"/>
<dbReference type="eggNOG" id="COG0245">
    <property type="taxonomic scope" value="Bacteria"/>
</dbReference>
<dbReference type="OrthoDB" id="9804336at2"/>
<dbReference type="UniPathway" id="UPA00056">
    <property type="reaction ID" value="UER00095"/>
</dbReference>
<dbReference type="Proteomes" id="UP000002483">
    <property type="component" value="Chromosome"/>
</dbReference>
<dbReference type="GO" id="GO:0008685">
    <property type="term" value="F:2-C-methyl-D-erythritol 2,4-cyclodiphosphate synthase activity"/>
    <property type="evidence" value="ECO:0007669"/>
    <property type="project" value="UniProtKB-UniRule"/>
</dbReference>
<dbReference type="GO" id="GO:0046872">
    <property type="term" value="F:metal ion binding"/>
    <property type="evidence" value="ECO:0007669"/>
    <property type="project" value="UniProtKB-KW"/>
</dbReference>
<dbReference type="GO" id="GO:0019288">
    <property type="term" value="P:isopentenyl diphosphate biosynthetic process, methylerythritol 4-phosphate pathway"/>
    <property type="evidence" value="ECO:0007669"/>
    <property type="project" value="UniProtKB-UniRule"/>
</dbReference>
<dbReference type="GO" id="GO:0016114">
    <property type="term" value="P:terpenoid biosynthetic process"/>
    <property type="evidence" value="ECO:0007669"/>
    <property type="project" value="InterPro"/>
</dbReference>
<dbReference type="CDD" id="cd00554">
    <property type="entry name" value="MECDP_synthase"/>
    <property type="match status" value="1"/>
</dbReference>
<dbReference type="FunFam" id="3.30.1330.50:FF:000001">
    <property type="entry name" value="2-C-methyl-D-erythritol 2,4-cyclodiphosphate synthase"/>
    <property type="match status" value="1"/>
</dbReference>
<dbReference type="Gene3D" id="3.30.1330.50">
    <property type="entry name" value="2-C-methyl-D-erythritol 2,4-cyclodiphosphate synthase"/>
    <property type="match status" value="1"/>
</dbReference>
<dbReference type="HAMAP" id="MF_00107">
    <property type="entry name" value="IspF"/>
    <property type="match status" value="1"/>
</dbReference>
<dbReference type="InterPro" id="IPR003526">
    <property type="entry name" value="MECDP_synthase"/>
</dbReference>
<dbReference type="InterPro" id="IPR020555">
    <property type="entry name" value="MECDP_synthase_CS"/>
</dbReference>
<dbReference type="InterPro" id="IPR036571">
    <property type="entry name" value="MECDP_synthase_sf"/>
</dbReference>
<dbReference type="NCBIfam" id="TIGR00151">
    <property type="entry name" value="ispF"/>
    <property type="match status" value="1"/>
</dbReference>
<dbReference type="PANTHER" id="PTHR43181">
    <property type="entry name" value="2-C-METHYL-D-ERYTHRITOL 2,4-CYCLODIPHOSPHATE SYNTHASE, CHLOROPLASTIC"/>
    <property type="match status" value="1"/>
</dbReference>
<dbReference type="PANTHER" id="PTHR43181:SF1">
    <property type="entry name" value="2-C-METHYL-D-ERYTHRITOL 2,4-CYCLODIPHOSPHATE SYNTHASE, CHLOROPLASTIC"/>
    <property type="match status" value="1"/>
</dbReference>
<dbReference type="Pfam" id="PF02542">
    <property type="entry name" value="YgbB"/>
    <property type="match status" value="1"/>
</dbReference>
<dbReference type="SUPFAM" id="SSF69765">
    <property type="entry name" value="IpsF-like"/>
    <property type="match status" value="1"/>
</dbReference>
<dbReference type="PROSITE" id="PS01350">
    <property type="entry name" value="ISPF"/>
    <property type="match status" value="1"/>
</dbReference>
<name>ISPF_NOSS1</name>